<accession>O06702</accession>
<reference key="1">
    <citation type="journal article" date="2003" name="Nat. Genet.">
        <title>Comparative analysis of the genome sequences of Bordetella pertussis, Bordetella parapertussis and Bordetella bronchiseptica.</title>
        <authorList>
            <person name="Parkhill J."/>
            <person name="Sebaihia M."/>
            <person name="Preston A."/>
            <person name="Murphy L.D."/>
            <person name="Thomson N.R."/>
            <person name="Harris D.E."/>
            <person name="Holden M.T.G."/>
            <person name="Churcher C.M."/>
            <person name="Bentley S.D."/>
            <person name="Mungall K.L."/>
            <person name="Cerdeno-Tarraga A.-M."/>
            <person name="Temple L."/>
            <person name="James K.D."/>
            <person name="Harris B."/>
            <person name="Quail M.A."/>
            <person name="Achtman M."/>
            <person name="Atkin R."/>
            <person name="Baker S."/>
            <person name="Basham D."/>
            <person name="Bason N."/>
            <person name="Cherevach I."/>
            <person name="Chillingworth T."/>
            <person name="Collins M."/>
            <person name="Cronin A."/>
            <person name="Davis P."/>
            <person name="Doggett J."/>
            <person name="Feltwell T."/>
            <person name="Goble A."/>
            <person name="Hamlin N."/>
            <person name="Hauser H."/>
            <person name="Holroyd S."/>
            <person name="Jagels K."/>
            <person name="Leather S."/>
            <person name="Moule S."/>
            <person name="Norberczak H."/>
            <person name="O'Neil S."/>
            <person name="Ormond D."/>
            <person name="Price C."/>
            <person name="Rabbinowitsch E."/>
            <person name="Rutter S."/>
            <person name="Sanders M."/>
            <person name="Saunders D."/>
            <person name="Seeger K."/>
            <person name="Sharp S."/>
            <person name="Simmonds M."/>
            <person name="Skelton J."/>
            <person name="Squares R."/>
            <person name="Squares S."/>
            <person name="Stevens K."/>
            <person name="Unwin L."/>
            <person name="Whitehead S."/>
            <person name="Barrell B.G."/>
            <person name="Maskell D.J."/>
        </authorList>
    </citation>
    <scope>NUCLEOTIDE SEQUENCE [LARGE SCALE GENOMIC DNA]</scope>
    <source>
        <strain>ATCC BAA-588 / NCTC 13252 / RB50</strain>
    </source>
</reference>
<reference key="2">
    <citation type="journal article" date="1998" name="Gene">
        <title>Characterisation of the urease gene cluster in Bordetella bronchiseptica.</title>
        <authorList>
            <person name="McMillan D.J."/>
            <person name="Mau M."/>
            <person name="Walker M.J."/>
        </authorList>
    </citation>
    <scope>NUCLEOTIDE SEQUENCE [GENOMIC DNA] OF 1-311</scope>
    <source>
        <strain>BB7866</strain>
    </source>
</reference>
<sequence length="335" mass="34886">MNKNIPAFHRRCHGLVQGLARTLLLAPVLLALSVPAAQAQTWPSRPIRMVVAAGAGSSVDVFARLVSERLSKALGQAVIVDPRPGANGTIAAQAVASAKPDGYTLLYAGNSALVVAPLMTKDLPYDAEKDLEPVAPVVYVPLAIAVGAKSAIQNIQELVAGAKTDEVFFATPGAASLSRLIGESINQKAGTRLVNIAYPSSPPAHTDIIGGQVPILIDGLGGIAPHAKSGRMRLLAVSTASRFAGFPDVPSISEAVPGLATPSMNIVMAPAGTPAEVLDLLNRHINEITADPAIASRFIPMGGESAQGSRQDTAAMLREQRVEFRKLMQTANIKP</sequence>
<name>Y4329_BORBR</name>
<gene>
    <name type="ordered locus">BB4329</name>
</gene>
<protein>
    <recommendedName>
        <fullName>UPF0065 protein BB4329</fullName>
    </recommendedName>
</protein>
<dbReference type="EMBL" id="BX640450">
    <property type="protein sequence ID" value="CAE34692.1"/>
    <property type="molecule type" value="Genomic_DNA"/>
</dbReference>
<dbReference type="EMBL" id="AF000579">
    <property type="protein sequence ID" value="AAC46131.1"/>
    <property type="molecule type" value="Genomic_DNA"/>
</dbReference>
<dbReference type="SMR" id="O06702"/>
<dbReference type="KEGG" id="bbr:BB4329"/>
<dbReference type="eggNOG" id="COG3181">
    <property type="taxonomic scope" value="Bacteria"/>
</dbReference>
<dbReference type="HOGENOM" id="CLU_045683_1_2_4"/>
<dbReference type="Proteomes" id="UP000001027">
    <property type="component" value="Chromosome"/>
</dbReference>
<dbReference type="GO" id="GO:0042597">
    <property type="term" value="C:periplasmic space"/>
    <property type="evidence" value="ECO:0007669"/>
    <property type="project" value="UniProtKB-SubCell"/>
</dbReference>
<dbReference type="CDD" id="cd07012">
    <property type="entry name" value="PBP2_Bug_TTT"/>
    <property type="match status" value="1"/>
</dbReference>
<dbReference type="Gene3D" id="3.40.190.150">
    <property type="entry name" value="Bordetella uptake gene, domain 1"/>
    <property type="match status" value="1"/>
</dbReference>
<dbReference type="Gene3D" id="3.40.190.10">
    <property type="entry name" value="Periplasmic binding protein-like II"/>
    <property type="match status" value="1"/>
</dbReference>
<dbReference type="InterPro" id="IPR005064">
    <property type="entry name" value="BUG"/>
</dbReference>
<dbReference type="InterPro" id="IPR042100">
    <property type="entry name" value="Bug_dom1"/>
</dbReference>
<dbReference type="PANTHER" id="PTHR42928:SF5">
    <property type="entry name" value="BLR1237 PROTEIN"/>
    <property type="match status" value="1"/>
</dbReference>
<dbReference type="PANTHER" id="PTHR42928">
    <property type="entry name" value="TRICARBOXYLATE-BINDING PROTEIN"/>
    <property type="match status" value="1"/>
</dbReference>
<dbReference type="Pfam" id="PF03401">
    <property type="entry name" value="TctC"/>
    <property type="match status" value="1"/>
</dbReference>
<dbReference type="PIRSF" id="PIRSF017082">
    <property type="entry name" value="YflP"/>
    <property type="match status" value="1"/>
</dbReference>
<dbReference type="SUPFAM" id="SSF53850">
    <property type="entry name" value="Periplasmic binding protein-like II"/>
    <property type="match status" value="1"/>
</dbReference>
<feature type="signal peptide" evidence="1">
    <location>
        <begin position="1"/>
        <end position="39"/>
    </location>
</feature>
<feature type="chain" id="PRO_0000036200" description="UPF0065 protein BB4329">
    <location>
        <begin position="40"/>
        <end position="335"/>
    </location>
</feature>
<organism>
    <name type="scientific">Bordetella bronchiseptica (strain ATCC BAA-588 / NCTC 13252 / RB50)</name>
    <name type="common">Alcaligenes bronchisepticus</name>
    <dbReference type="NCBI Taxonomy" id="257310"/>
    <lineage>
        <taxon>Bacteria</taxon>
        <taxon>Pseudomonadati</taxon>
        <taxon>Pseudomonadota</taxon>
        <taxon>Betaproteobacteria</taxon>
        <taxon>Burkholderiales</taxon>
        <taxon>Alcaligenaceae</taxon>
        <taxon>Bordetella</taxon>
    </lineage>
</organism>
<evidence type="ECO:0000255" key="1"/>
<evidence type="ECO:0000305" key="2"/>
<comment type="subcellular location">
    <subcellularLocation>
        <location evidence="2">Periplasm</location>
    </subcellularLocation>
</comment>
<comment type="similarity">
    <text evidence="2">Belongs to the UPF0065 (bug) family.</text>
</comment>
<proteinExistence type="inferred from homology"/>
<keyword id="KW-0574">Periplasm</keyword>
<keyword id="KW-0732">Signal</keyword>